<evidence type="ECO:0000255" key="1">
    <source>
        <dbReference type="HAMAP-Rule" id="MF_00134"/>
    </source>
</evidence>
<evidence type="ECO:0000256" key="2">
    <source>
        <dbReference type="SAM" id="MobiDB-lite"/>
    </source>
</evidence>
<protein>
    <recommendedName>
        <fullName evidence="1">Indole-3-glycerol phosphate synthase</fullName>
        <shortName evidence="1">IGPS</shortName>
        <ecNumber evidence="1">4.1.1.48</ecNumber>
    </recommendedName>
</protein>
<organism>
    <name type="scientific">Halobacterium salinarum (strain ATCC 700922 / JCM 11081 / NRC-1)</name>
    <name type="common">Halobacterium halobium</name>
    <dbReference type="NCBI Taxonomy" id="64091"/>
    <lineage>
        <taxon>Archaea</taxon>
        <taxon>Methanobacteriati</taxon>
        <taxon>Methanobacteriota</taxon>
        <taxon>Stenosarchaea group</taxon>
        <taxon>Halobacteria</taxon>
        <taxon>Halobacteriales</taxon>
        <taxon>Halobacteriaceae</taxon>
        <taxon>Halobacterium</taxon>
        <taxon>Halobacterium salinarum NRC-34001</taxon>
    </lineage>
</organism>
<comment type="catalytic activity">
    <reaction evidence="1">
        <text>1-(2-carboxyphenylamino)-1-deoxy-D-ribulose 5-phosphate + H(+) = (1S,2R)-1-C-(indol-3-yl)glycerol 3-phosphate + CO2 + H2O</text>
        <dbReference type="Rhea" id="RHEA:23476"/>
        <dbReference type="ChEBI" id="CHEBI:15377"/>
        <dbReference type="ChEBI" id="CHEBI:15378"/>
        <dbReference type="ChEBI" id="CHEBI:16526"/>
        <dbReference type="ChEBI" id="CHEBI:58613"/>
        <dbReference type="ChEBI" id="CHEBI:58866"/>
        <dbReference type="EC" id="4.1.1.48"/>
    </reaction>
</comment>
<comment type="pathway">
    <text evidence="1">Amino-acid biosynthesis; L-tryptophan biosynthesis; L-tryptophan from chorismate: step 4/5.</text>
</comment>
<comment type="similarity">
    <text evidence="1">Belongs to the TrpC family.</text>
</comment>
<feature type="chain" id="PRO_0000154290" description="Indole-3-glycerol phosphate synthase">
    <location>
        <begin position="1"/>
        <end position="251"/>
    </location>
</feature>
<feature type="region of interest" description="Disordered" evidence="2">
    <location>
        <begin position="1"/>
        <end position="27"/>
    </location>
</feature>
<feature type="compositionally biased region" description="Polar residues" evidence="2">
    <location>
        <begin position="1"/>
        <end position="12"/>
    </location>
</feature>
<proteinExistence type="inferred from homology"/>
<sequence>MDDSSSLASPVQSILAAARRRDPPTRRCTVSARSLPAALHSAAADGRTPIIAEVKPTSPTTDTEHSGDPAELAREMVAGGAAAVSVLTEPHHFDGSTDALRAIRDAVDVPVLRKDFLLTEPQLDAVAADAVLLIARFLGDDLGDMLAAARDRGFQALVEVHSPRELARAVDADADIIGVNNRDLTALTVDLDTFGAVAPEAPADVTLVAESGIATPTDARTMRAAGADGLLVGSAIMDGPVRDTTRRLVTA</sequence>
<dbReference type="EC" id="4.1.1.48" evidence="1"/>
<dbReference type="EMBL" id="AE004437">
    <property type="protein sequence ID" value="AAG18886.1"/>
    <property type="molecule type" value="Genomic_DNA"/>
</dbReference>
<dbReference type="PIR" id="B84190">
    <property type="entry name" value="B84190"/>
</dbReference>
<dbReference type="RefSeq" id="WP_010902180.1">
    <property type="nucleotide sequence ID" value="NC_002607.1"/>
</dbReference>
<dbReference type="SMR" id="Q9HSC1"/>
<dbReference type="FunCoup" id="Q9HSC1">
    <property type="interactions" value="90"/>
</dbReference>
<dbReference type="STRING" id="64091.VNG_0305G"/>
<dbReference type="PaxDb" id="64091-VNG_0305G"/>
<dbReference type="GeneID" id="68693253"/>
<dbReference type="KEGG" id="hal:VNG_0305G"/>
<dbReference type="PATRIC" id="fig|64091.14.peg.225"/>
<dbReference type="HOGENOM" id="CLU_034247_0_1_2"/>
<dbReference type="InParanoid" id="Q9HSC1"/>
<dbReference type="OrthoDB" id="15223at2157"/>
<dbReference type="PhylomeDB" id="Q9HSC1"/>
<dbReference type="UniPathway" id="UPA00035">
    <property type="reaction ID" value="UER00043"/>
</dbReference>
<dbReference type="Proteomes" id="UP000000554">
    <property type="component" value="Chromosome"/>
</dbReference>
<dbReference type="GO" id="GO:0004425">
    <property type="term" value="F:indole-3-glycerol-phosphate synthase activity"/>
    <property type="evidence" value="ECO:0000318"/>
    <property type="project" value="GO_Central"/>
</dbReference>
<dbReference type="GO" id="GO:0004640">
    <property type="term" value="F:phosphoribosylanthranilate isomerase activity"/>
    <property type="evidence" value="ECO:0000318"/>
    <property type="project" value="GO_Central"/>
</dbReference>
<dbReference type="GO" id="GO:0000162">
    <property type="term" value="P:L-tryptophan biosynthetic process"/>
    <property type="evidence" value="ECO:0000318"/>
    <property type="project" value="GO_Central"/>
</dbReference>
<dbReference type="CDD" id="cd00331">
    <property type="entry name" value="IGPS"/>
    <property type="match status" value="1"/>
</dbReference>
<dbReference type="Gene3D" id="3.20.20.70">
    <property type="entry name" value="Aldolase class I"/>
    <property type="match status" value="1"/>
</dbReference>
<dbReference type="HAMAP" id="MF_00134_A">
    <property type="entry name" value="IGPS_A"/>
    <property type="match status" value="1"/>
</dbReference>
<dbReference type="InterPro" id="IPR013785">
    <property type="entry name" value="Aldolase_TIM"/>
</dbReference>
<dbReference type="InterPro" id="IPR054875">
    <property type="entry name" value="Indglycph_syn_Halo_TrpC"/>
</dbReference>
<dbReference type="InterPro" id="IPR045186">
    <property type="entry name" value="Indole-3-glycerol_P_synth"/>
</dbReference>
<dbReference type="InterPro" id="IPR013798">
    <property type="entry name" value="Indole-3-glycerol_P_synth_dom"/>
</dbReference>
<dbReference type="InterPro" id="IPR001468">
    <property type="entry name" value="Indole-3-GlycerolPSynthase_CS"/>
</dbReference>
<dbReference type="InterPro" id="IPR011060">
    <property type="entry name" value="RibuloseP-bd_barrel"/>
</dbReference>
<dbReference type="NCBIfam" id="NF041303">
    <property type="entry name" value="Indglycph_syn_Halo_TrpC"/>
    <property type="match status" value="1"/>
</dbReference>
<dbReference type="PANTHER" id="PTHR22854:SF2">
    <property type="entry name" value="INDOLE-3-GLYCEROL-PHOSPHATE SYNTHASE"/>
    <property type="match status" value="1"/>
</dbReference>
<dbReference type="PANTHER" id="PTHR22854">
    <property type="entry name" value="TRYPTOPHAN BIOSYNTHESIS PROTEIN"/>
    <property type="match status" value="1"/>
</dbReference>
<dbReference type="Pfam" id="PF00218">
    <property type="entry name" value="IGPS"/>
    <property type="match status" value="1"/>
</dbReference>
<dbReference type="SUPFAM" id="SSF51366">
    <property type="entry name" value="Ribulose-phoshate binding barrel"/>
    <property type="match status" value="1"/>
</dbReference>
<dbReference type="PROSITE" id="PS00614">
    <property type="entry name" value="IGPS"/>
    <property type="match status" value="1"/>
</dbReference>
<gene>
    <name evidence="1" type="primary">trpC</name>
    <name type="ordered locus">VNG_0305G</name>
</gene>
<reference key="1">
    <citation type="journal article" date="2000" name="Proc. Natl. Acad. Sci. U.S.A.">
        <title>Genome sequence of Halobacterium species NRC-1.</title>
        <authorList>
            <person name="Ng W.V."/>
            <person name="Kennedy S.P."/>
            <person name="Mahairas G.G."/>
            <person name="Berquist B."/>
            <person name="Pan M."/>
            <person name="Shukla H.D."/>
            <person name="Lasky S.R."/>
            <person name="Baliga N.S."/>
            <person name="Thorsson V."/>
            <person name="Sbrogna J."/>
            <person name="Swartzell S."/>
            <person name="Weir D."/>
            <person name="Hall J."/>
            <person name="Dahl T.A."/>
            <person name="Welti R."/>
            <person name="Goo Y.A."/>
            <person name="Leithauser B."/>
            <person name="Keller K."/>
            <person name="Cruz R."/>
            <person name="Danson M.J."/>
            <person name="Hough D.W."/>
            <person name="Maddocks D.G."/>
            <person name="Jablonski P.E."/>
            <person name="Krebs M.P."/>
            <person name="Angevine C.M."/>
            <person name="Dale H."/>
            <person name="Isenbarger T.A."/>
            <person name="Peck R.F."/>
            <person name="Pohlschroder M."/>
            <person name="Spudich J.L."/>
            <person name="Jung K.-H."/>
            <person name="Alam M."/>
            <person name="Freitas T."/>
            <person name="Hou S."/>
            <person name="Daniels C.J."/>
            <person name="Dennis P.P."/>
            <person name="Omer A.D."/>
            <person name="Ebhardt H."/>
            <person name="Lowe T.M."/>
            <person name="Liang P."/>
            <person name="Riley M."/>
            <person name="Hood L."/>
            <person name="DasSarma S."/>
        </authorList>
    </citation>
    <scope>NUCLEOTIDE SEQUENCE [LARGE SCALE GENOMIC DNA]</scope>
    <source>
        <strain>ATCC 700922 / JCM 11081 / NRC-1</strain>
    </source>
</reference>
<keyword id="KW-0028">Amino-acid biosynthesis</keyword>
<keyword id="KW-0057">Aromatic amino acid biosynthesis</keyword>
<keyword id="KW-0210">Decarboxylase</keyword>
<keyword id="KW-0456">Lyase</keyword>
<keyword id="KW-1185">Reference proteome</keyword>
<keyword id="KW-0822">Tryptophan biosynthesis</keyword>
<accession>Q9HSC1</accession>
<name>TRPC_HALSA</name>